<sequence length="308" mass="34091">MALIQHGSVSGTSAVRLSFSSSVSPPSSSPPLSRVSLNFQSEKKSCYRRMICRAMVQDSVQGIPSVYAREMERLSAKESLILAFNDAGGFEALVTGKITDMQKIDVNERITNLERLNPTPRPTTSPYLEGRWSFEWFGVNTPGSLAVRVMFERFPSTLVSLSNMEIFIKDNNTKATANIKLLNSIENKITLSSKLTIEGPLRMKEEYLEGLLESPTVIEEAVPDQLRGLLGQATTTLQQLPEPIKDTLANGLRIPLGGTYQRFFMISYLDDEILIVRDTAGVPEVLTRVETSSPMSSSSVVENLEYNS</sequence>
<name>PAP9_ARATH</name>
<organism>
    <name type="scientific">Arabidopsis thaliana</name>
    <name type="common">Mouse-ear cress</name>
    <dbReference type="NCBI Taxonomy" id="3702"/>
    <lineage>
        <taxon>Eukaryota</taxon>
        <taxon>Viridiplantae</taxon>
        <taxon>Streptophyta</taxon>
        <taxon>Embryophyta</taxon>
        <taxon>Tracheophyta</taxon>
        <taxon>Spermatophyta</taxon>
        <taxon>Magnoliopsida</taxon>
        <taxon>eudicotyledons</taxon>
        <taxon>Gunneridae</taxon>
        <taxon>Pentapetalae</taxon>
        <taxon>rosids</taxon>
        <taxon>malvids</taxon>
        <taxon>Brassicales</taxon>
        <taxon>Brassicaceae</taxon>
        <taxon>Camelineae</taxon>
        <taxon>Arabidopsis</taxon>
    </lineage>
</organism>
<protein>
    <recommendedName>
        <fullName>Probable plastid-lipid-associated protein 9, chloroplastic</fullName>
    </recommendedName>
    <alternativeName>
        <fullName>Fibrillin-7a</fullName>
        <shortName>AtPGL34</shortName>
    </alternativeName>
</protein>
<keyword id="KW-0150">Chloroplast</keyword>
<keyword id="KW-0934">Plastid</keyword>
<keyword id="KW-1185">Reference proteome</keyword>
<keyword id="KW-0809">Transit peptide</keyword>
<accession>Q9M2P7</accession>
<comment type="subcellular location">
    <subcellularLocation>
        <location evidence="1 2 3 4">Plastid</location>
        <location evidence="1 2 3 4">Chloroplast</location>
        <location evidence="1 2 3 4">Plastoglobule</location>
    </subcellularLocation>
</comment>
<comment type="similarity">
    <text evidence="5">Belongs to the PAP/fibrillin family.</text>
</comment>
<dbReference type="EMBL" id="AL132977">
    <property type="protein sequence ID" value="CAB67629.1"/>
    <property type="molecule type" value="Genomic_DNA"/>
</dbReference>
<dbReference type="EMBL" id="CP002686">
    <property type="protein sequence ID" value="AEE79729.1"/>
    <property type="molecule type" value="Genomic_DNA"/>
</dbReference>
<dbReference type="EMBL" id="CP002686">
    <property type="protein sequence ID" value="ANM63563.1"/>
    <property type="molecule type" value="Genomic_DNA"/>
</dbReference>
<dbReference type="EMBL" id="BT001242">
    <property type="protein sequence ID" value="AAN65129.1"/>
    <property type="molecule type" value="mRNA"/>
</dbReference>
<dbReference type="EMBL" id="AY128358">
    <property type="protein sequence ID" value="AAM91561.1"/>
    <property type="molecule type" value="mRNA"/>
</dbReference>
<dbReference type="EMBL" id="AY085933">
    <property type="protein sequence ID" value="AAM63144.1"/>
    <property type="molecule type" value="mRNA"/>
</dbReference>
<dbReference type="PIR" id="T46023">
    <property type="entry name" value="T46023"/>
</dbReference>
<dbReference type="FunCoup" id="Q9M2P7">
    <property type="interactions" value="1168"/>
</dbReference>
<dbReference type="STRING" id="3702.Q9M2P7"/>
<dbReference type="PaxDb" id="3702-AT3G58010.1"/>
<dbReference type="ProteomicsDB" id="236836"/>
<dbReference type="EnsemblPlants" id="AT3G58010.1">
    <property type="protein sequence ID" value="AT3G58010.1"/>
    <property type="gene ID" value="AT3G58010"/>
</dbReference>
<dbReference type="EnsemblPlants" id="AT3G58010.2">
    <property type="protein sequence ID" value="AT3G58010.2"/>
    <property type="gene ID" value="AT3G58010"/>
</dbReference>
<dbReference type="Gramene" id="AT3G58010.1">
    <property type="protein sequence ID" value="AT3G58010.1"/>
    <property type="gene ID" value="AT3G58010"/>
</dbReference>
<dbReference type="Gramene" id="AT3G58010.2">
    <property type="protein sequence ID" value="AT3G58010.2"/>
    <property type="gene ID" value="AT3G58010"/>
</dbReference>
<dbReference type="KEGG" id="ath:AT3G58010"/>
<dbReference type="Araport" id="AT3G58010"/>
<dbReference type="TAIR" id="AT3G58010">
    <property type="gene designation" value="PGL34"/>
</dbReference>
<dbReference type="eggNOG" id="ENOG502S160">
    <property type="taxonomic scope" value="Eukaryota"/>
</dbReference>
<dbReference type="HOGENOM" id="CLU_074226_0_0_1"/>
<dbReference type="InParanoid" id="Q9M2P7"/>
<dbReference type="OMA" id="YSRRMIC"/>
<dbReference type="PhylomeDB" id="Q9M2P7"/>
<dbReference type="PRO" id="PR:Q9M2P7"/>
<dbReference type="Proteomes" id="UP000006548">
    <property type="component" value="Chromosome 3"/>
</dbReference>
<dbReference type="ExpressionAtlas" id="Q9M2P7">
    <property type="expression patterns" value="baseline and differential"/>
</dbReference>
<dbReference type="GO" id="GO:0009507">
    <property type="term" value="C:chloroplast"/>
    <property type="evidence" value="ECO:0007005"/>
    <property type="project" value="TAIR"/>
</dbReference>
<dbReference type="GO" id="GO:0009535">
    <property type="term" value="C:chloroplast thylakoid membrane"/>
    <property type="evidence" value="ECO:0007005"/>
    <property type="project" value="TAIR"/>
</dbReference>
<dbReference type="GO" id="GO:0005829">
    <property type="term" value="C:cytosol"/>
    <property type="evidence" value="ECO:0007005"/>
    <property type="project" value="TAIR"/>
</dbReference>
<dbReference type="GO" id="GO:0010287">
    <property type="term" value="C:plastoglobule"/>
    <property type="evidence" value="ECO:0007005"/>
    <property type="project" value="TAIR"/>
</dbReference>
<dbReference type="GO" id="GO:0009579">
    <property type="term" value="C:thylakoid"/>
    <property type="evidence" value="ECO:0007005"/>
    <property type="project" value="TAIR"/>
</dbReference>
<dbReference type="GO" id="GO:0031977">
    <property type="term" value="C:thylakoid lumen"/>
    <property type="evidence" value="ECO:0007005"/>
    <property type="project" value="TAIR"/>
</dbReference>
<dbReference type="InterPro" id="IPR039633">
    <property type="entry name" value="PAP"/>
</dbReference>
<dbReference type="InterPro" id="IPR006843">
    <property type="entry name" value="PAP/fibrillin_dom"/>
</dbReference>
<dbReference type="PANTHER" id="PTHR31906">
    <property type="entry name" value="PLASTID-LIPID-ASSOCIATED PROTEIN 4, CHLOROPLASTIC-RELATED"/>
    <property type="match status" value="1"/>
</dbReference>
<dbReference type="Pfam" id="PF04755">
    <property type="entry name" value="PAP_fibrillin"/>
    <property type="match status" value="1"/>
</dbReference>
<feature type="transit peptide" description="Chloroplast" evidence="5">
    <location>
        <begin position="1"/>
        <end position="55"/>
    </location>
</feature>
<feature type="chain" id="PRO_0000286537" description="Probable plastid-lipid-associated protein 9, chloroplastic">
    <location>
        <begin position="56"/>
        <end position="308"/>
    </location>
</feature>
<gene>
    <name type="primary">PAP9</name>
    <name type="synonym">FBN7a</name>
    <name type="synonym">FIB7a</name>
    <name type="ordered locus">At3g58010</name>
    <name type="ORF">T10K17.220</name>
</gene>
<reference key="1">
    <citation type="journal article" date="2000" name="Nature">
        <title>Sequence and analysis of chromosome 3 of the plant Arabidopsis thaliana.</title>
        <authorList>
            <person name="Salanoubat M."/>
            <person name="Lemcke K."/>
            <person name="Rieger M."/>
            <person name="Ansorge W."/>
            <person name="Unseld M."/>
            <person name="Fartmann B."/>
            <person name="Valle G."/>
            <person name="Bloecker H."/>
            <person name="Perez-Alonso M."/>
            <person name="Obermaier B."/>
            <person name="Delseny M."/>
            <person name="Boutry M."/>
            <person name="Grivell L.A."/>
            <person name="Mache R."/>
            <person name="Puigdomenech P."/>
            <person name="De Simone V."/>
            <person name="Choisne N."/>
            <person name="Artiguenave F."/>
            <person name="Robert C."/>
            <person name="Brottier P."/>
            <person name="Wincker P."/>
            <person name="Cattolico L."/>
            <person name="Weissenbach J."/>
            <person name="Saurin W."/>
            <person name="Quetier F."/>
            <person name="Schaefer M."/>
            <person name="Mueller-Auer S."/>
            <person name="Gabel C."/>
            <person name="Fuchs M."/>
            <person name="Benes V."/>
            <person name="Wurmbach E."/>
            <person name="Drzonek H."/>
            <person name="Erfle H."/>
            <person name="Jordan N."/>
            <person name="Bangert S."/>
            <person name="Wiedelmann R."/>
            <person name="Kranz H."/>
            <person name="Voss H."/>
            <person name="Holland R."/>
            <person name="Brandt P."/>
            <person name="Nyakatura G."/>
            <person name="Vezzi A."/>
            <person name="D'Angelo M."/>
            <person name="Pallavicini A."/>
            <person name="Toppo S."/>
            <person name="Simionati B."/>
            <person name="Conrad A."/>
            <person name="Hornischer K."/>
            <person name="Kauer G."/>
            <person name="Loehnert T.-H."/>
            <person name="Nordsiek G."/>
            <person name="Reichelt J."/>
            <person name="Scharfe M."/>
            <person name="Schoen O."/>
            <person name="Bargues M."/>
            <person name="Terol J."/>
            <person name="Climent J."/>
            <person name="Navarro P."/>
            <person name="Collado C."/>
            <person name="Perez-Perez A."/>
            <person name="Ottenwaelder B."/>
            <person name="Duchemin D."/>
            <person name="Cooke R."/>
            <person name="Laudie M."/>
            <person name="Berger-Llauro C."/>
            <person name="Purnelle B."/>
            <person name="Masuy D."/>
            <person name="de Haan M."/>
            <person name="Maarse A.C."/>
            <person name="Alcaraz J.-P."/>
            <person name="Cottet A."/>
            <person name="Casacuberta E."/>
            <person name="Monfort A."/>
            <person name="Argiriou A."/>
            <person name="Flores M."/>
            <person name="Liguori R."/>
            <person name="Vitale D."/>
            <person name="Mannhaupt G."/>
            <person name="Haase D."/>
            <person name="Schoof H."/>
            <person name="Rudd S."/>
            <person name="Zaccaria P."/>
            <person name="Mewes H.-W."/>
            <person name="Mayer K.F.X."/>
            <person name="Kaul S."/>
            <person name="Town C.D."/>
            <person name="Koo H.L."/>
            <person name="Tallon L.J."/>
            <person name="Jenkins J."/>
            <person name="Rooney T."/>
            <person name="Rizzo M."/>
            <person name="Walts A."/>
            <person name="Utterback T."/>
            <person name="Fujii C.Y."/>
            <person name="Shea T.P."/>
            <person name="Creasy T.H."/>
            <person name="Haas B."/>
            <person name="Maiti R."/>
            <person name="Wu D."/>
            <person name="Peterson J."/>
            <person name="Van Aken S."/>
            <person name="Pai G."/>
            <person name="Militscher J."/>
            <person name="Sellers P."/>
            <person name="Gill J.E."/>
            <person name="Feldblyum T.V."/>
            <person name="Preuss D."/>
            <person name="Lin X."/>
            <person name="Nierman W.C."/>
            <person name="Salzberg S.L."/>
            <person name="White O."/>
            <person name="Venter J.C."/>
            <person name="Fraser C.M."/>
            <person name="Kaneko T."/>
            <person name="Nakamura Y."/>
            <person name="Sato S."/>
            <person name="Kato T."/>
            <person name="Asamizu E."/>
            <person name="Sasamoto S."/>
            <person name="Kimura T."/>
            <person name="Idesawa K."/>
            <person name="Kawashima K."/>
            <person name="Kishida Y."/>
            <person name="Kiyokawa C."/>
            <person name="Kohara M."/>
            <person name="Matsumoto M."/>
            <person name="Matsuno A."/>
            <person name="Muraki A."/>
            <person name="Nakayama S."/>
            <person name="Nakazaki N."/>
            <person name="Shinpo S."/>
            <person name="Takeuchi C."/>
            <person name="Wada T."/>
            <person name="Watanabe A."/>
            <person name="Yamada M."/>
            <person name="Yasuda M."/>
            <person name="Tabata S."/>
        </authorList>
    </citation>
    <scope>NUCLEOTIDE SEQUENCE [LARGE SCALE GENOMIC DNA]</scope>
    <source>
        <strain>cv. Columbia</strain>
    </source>
</reference>
<reference key="2">
    <citation type="journal article" date="2017" name="Plant J.">
        <title>Araport11: a complete reannotation of the Arabidopsis thaliana reference genome.</title>
        <authorList>
            <person name="Cheng C.Y."/>
            <person name="Krishnakumar V."/>
            <person name="Chan A.P."/>
            <person name="Thibaud-Nissen F."/>
            <person name="Schobel S."/>
            <person name="Town C.D."/>
        </authorList>
    </citation>
    <scope>GENOME REANNOTATION</scope>
    <source>
        <strain>cv. Columbia</strain>
    </source>
</reference>
<reference key="3">
    <citation type="journal article" date="2003" name="Science">
        <title>Empirical analysis of transcriptional activity in the Arabidopsis genome.</title>
        <authorList>
            <person name="Yamada K."/>
            <person name="Lim J."/>
            <person name="Dale J.M."/>
            <person name="Chen H."/>
            <person name="Shinn P."/>
            <person name="Palm C.J."/>
            <person name="Southwick A.M."/>
            <person name="Wu H.C."/>
            <person name="Kim C.J."/>
            <person name="Nguyen M."/>
            <person name="Pham P.K."/>
            <person name="Cheuk R.F."/>
            <person name="Karlin-Newmann G."/>
            <person name="Liu S.X."/>
            <person name="Lam B."/>
            <person name="Sakano H."/>
            <person name="Wu T."/>
            <person name="Yu G."/>
            <person name="Miranda M."/>
            <person name="Quach H.L."/>
            <person name="Tripp M."/>
            <person name="Chang C.H."/>
            <person name="Lee J.M."/>
            <person name="Toriumi M.J."/>
            <person name="Chan M.M."/>
            <person name="Tang C.C."/>
            <person name="Onodera C.S."/>
            <person name="Deng J.M."/>
            <person name="Akiyama K."/>
            <person name="Ansari Y."/>
            <person name="Arakawa T."/>
            <person name="Banh J."/>
            <person name="Banno F."/>
            <person name="Bowser L."/>
            <person name="Brooks S.Y."/>
            <person name="Carninci P."/>
            <person name="Chao Q."/>
            <person name="Choy N."/>
            <person name="Enju A."/>
            <person name="Goldsmith A.D."/>
            <person name="Gurjal M."/>
            <person name="Hansen N.F."/>
            <person name="Hayashizaki Y."/>
            <person name="Johnson-Hopson C."/>
            <person name="Hsuan V.W."/>
            <person name="Iida K."/>
            <person name="Karnes M."/>
            <person name="Khan S."/>
            <person name="Koesema E."/>
            <person name="Ishida J."/>
            <person name="Jiang P.X."/>
            <person name="Jones T."/>
            <person name="Kawai J."/>
            <person name="Kamiya A."/>
            <person name="Meyers C."/>
            <person name="Nakajima M."/>
            <person name="Narusaka M."/>
            <person name="Seki M."/>
            <person name="Sakurai T."/>
            <person name="Satou M."/>
            <person name="Tamse R."/>
            <person name="Vaysberg M."/>
            <person name="Wallender E.K."/>
            <person name="Wong C."/>
            <person name="Yamamura Y."/>
            <person name="Yuan S."/>
            <person name="Shinozaki K."/>
            <person name="Davis R.W."/>
            <person name="Theologis A."/>
            <person name="Ecker J.R."/>
        </authorList>
    </citation>
    <scope>NUCLEOTIDE SEQUENCE [LARGE SCALE MRNA]</scope>
    <source>
        <strain>cv. Columbia</strain>
    </source>
</reference>
<reference key="4">
    <citation type="submission" date="2002-03" db="EMBL/GenBank/DDBJ databases">
        <title>Full-length cDNA from Arabidopsis thaliana.</title>
        <authorList>
            <person name="Brover V.V."/>
            <person name="Troukhan M.E."/>
            <person name="Alexandrov N.A."/>
            <person name="Lu Y.-P."/>
            <person name="Flavell R.B."/>
            <person name="Feldmann K.A."/>
        </authorList>
    </citation>
    <scope>NUCLEOTIDE SEQUENCE [LARGE SCALE MRNA]</scope>
</reference>
<reference key="5">
    <citation type="journal article" date="2006" name="J. Biol. Chem.">
        <title>Tocopherol cyclase (VTE1) localization and vitamin E accumulation in chloroplast plastoglobule lipoprotein particles.</title>
        <authorList>
            <person name="Vidi P.-A."/>
            <person name="Kanwischer M."/>
            <person name="Baginsky S."/>
            <person name="Austin J.R."/>
            <person name="Csucs G."/>
            <person name="Doermann P."/>
            <person name="Kessler F."/>
            <person name="Brehelin C."/>
        </authorList>
    </citation>
    <scope>SUBCELLULAR LOCATION</scope>
    <source>
        <strain>cv. Col-2</strain>
    </source>
</reference>
<reference key="6">
    <citation type="journal article" date="2006" name="Plant Physiol.">
        <title>Protein profiling of plastoglobules in chloroplasts and chromoplasts. A surprising site for differential accumulation of metabolic enzymes.</title>
        <authorList>
            <person name="Ytterberg A.J."/>
            <person name="Peltier J.-B."/>
            <person name="van Wijk K.J."/>
        </authorList>
    </citation>
    <scope>IDENTIFICATION BY MASS SPECTROMETRY</scope>
    <scope>SUBCELLULAR LOCATION [LARGE SCALE ANALYSIS]</scope>
    <source>
        <strain>cv. Columbia</strain>
    </source>
</reference>
<reference key="7">
    <citation type="journal article" date="2007" name="BMC Biotechnol.">
        <title>Plastoglobules: a new address for targeting recombinant proteins in the chloroplast.</title>
        <authorList>
            <person name="Vidi P.A."/>
            <person name="Kessler F."/>
            <person name="Brehelin C."/>
        </authorList>
    </citation>
    <scope>SUBCELLULAR LOCATION</scope>
</reference>
<reference key="8">
    <citation type="journal article" date="2011" name="Trends Plant Sci.">
        <title>Fibrillin protein function: the tip of the iceberg?</title>
        <authorList>
            <person name="Singh D.K."/>
            <person name="McNellis T.W."/>
        </authorList>
    </citation>
    <scope>GENE FAMILY</scope>
    <scope>NOMENCLATURE</scope>
</reference>
<reference key="9">
    <citation type="journal article" date="2012" name="Plant Physiol.">
        <title>The functional network of the Arabidopsis plastoglobule proteome based on quantitative proteomics and genome-wide coexpression analysis.</title>
        <authorList>
            <person name="Lundquist P.K."/>
            <person name="Poliakov A."/>
            <person name="Bhuiyan N.H."/>
            <person name="Zybailov B."/>
            <person name="Sun Q."/>
            <person name="van Wijk K.J."/>
        </authorList>
    </citation>
    <scope>IDENTIFICATION BY MASS SPECTROMETRY</scope>
    <scope>SUBCELLULAR LOCATION [LARGE SCALE ANALYSIS]</scope>
    <source>
        <strain>cv. Columbia</strain>
    </source>
</reference>
<evidence type="ECO:0000269" key="1">
    <source>
    </source>
</evidence>
<evidence type="ECO:0000269" key="2">
    <source>
    </source>
</evidence>
<evidence type="ECO:0000269" key="3">
    <source>
    </source>
</evidence>
<evidence type="ECO:0000269" key="4">
    <source>
    </source>
</evidence>
<evidence type="ECO:0000305" key="5"/>
<proteinExistence type="evidence at protein level"/>